<proteinExistence type="inferred from homology"/>
<feature type="chain" id="PRO_0000353417" description="DNA-directed RNA polymerase subunit beta'">
    <location>
        <begin position="1"/>
        <end position="1415"/>
    </location>
</feature>
<feature type="binding site" evidence="1">
    <location>
        <position position="72"/>
    </location>
    <ligand>
        <name>Zn(2+)</name>
        <dbReference type="ChEBI" id="CHEBI:29105"/>
        <label>1</label>
    </ligand>
</feature>
<feature type="binding site" evidence="1">
    <location>
        <position position="74"/>
    </location>
    <ligand>
        <name>Zn(2+)</name>
        <dbReference type="ChEBI" id="CHEBI:29105"/>
        <label>1</label>
    </ligand>
</feature>
<feature type="binding site" evidence="1">
    <location>
        <position position="87"/>
    </location>
    <ligand>
        <name>Zn(2+)</name>
        <dbReference type="ChEBI" id="CHEBI:29105"/>
        <label>1</label>
    </ligand>
</feature>
<feature type="binding site" evidence="1">
    <location>
        <position position="90"/>
    </location>
    <ligand>
        <name>Zn(2+)</name>
        <dbReference type="ChEBI" id="CHEBI:29105"/>
        <label>1</label>
    </ligand>
</feature>
<feature type="binding site" evidence="1">
    <location>
        <position position="463"/>
    </location>
    <ligand>
        <name>Mg(2+)</name>
        <dbReference type="ChEBI" id="CHEBI:18420"/>
    </ligand>
</feature>
<feature type="binding site" evidence="1">
    <location>
        <position position="465"/>
    </location>
    <ligand>
        <name>Mg(2+)</name>
        <dbReference type="ChEBI" id="CHEBI:18420"/>
    </ligand>
</feature>
<feature type="binding site" evidence="1">
    <location>
        <position position="467"/>
    </location>
    <ligand>
        <name>Mg(2+)</name>
        <dbReference type="ChEBI" id="CHEBI:18420"/>
    </ligand>
</feature>
<feature type="binding site" evidence="1">
    <location>
        <position position="811"/>
    </location>
    <ligand>
        <name>Zn(2+)</name>
        <dbReference type="ChEBI" id="CHEBI:29105"/>
        <label>2</label>
    </ligand>
</feature>
<feature type="binding site" evidence="1">
    <location>
        <position position="885"/>
    </location>
    <ligand>
        <name>Zn(2+)</name>
        <dbReference type="ChEBI" id="CHEBI:29105"/>
        <label>2</label>
    </ligand>
</feature>
<feature type="binding site" evidence="1">
    <location>
        <position position="892"/>
    </location>
    <ligand>
        <name>Zn(2+)</name>
        <dbReference type="ChEBI" id="CHEBI:29105"/>
        <label>2</label>
    </ligand>
</feature>
<feature type="binding site" evidence="1">
    <location>
        <position position="895"/>
    </location>
    <ligand>
        <name>Zn(2+)</name>
        <dbReference type="ChEBI" id="CHEBI:29105"/>
        <label>2</label>
    </ligand>
</feature>
<organism>
    <name type="scientific">Cereibacter sphaeroides (strain ATCC 17025 / ATH 2.4.3)</name>
    <name type="common">Rhodobacter sphaeroides</name>
    <dbReference type="NCBI Taxonomy" id="349102"/>
    <lineage>
        <taxon>Bacteria</taxon>
        <taxon>Pseudomonadati</taxon>
        <taxon>Pseudomonadota</taxon>
        <taxon>Alphaproteobacteria</taxon>
        <taxon>Rhodobacterales</taxon>
        <taxon>Paracoccaceae</taxon>
        <taxon>Cereibacter</taxon>
    </lineage>
</organism>
<reference key="1">
    <citation type="submission" date="2007-04" db="EMBL/GenBank/DDBJ databases">
        <title>Complete sequence of chromosome of Rhodobacter sphaeroides ATCC 17025.</title>
        <authorList>
            <consortium name="US DOE Joint Genome Institute"/>
            <person name="Copeland A."/>
            <person name="Lucas S."/>
            <person name="Lapidus A."/>
            <person name="Barry K."/>
            <person name="Detter J.C."/>
            <person name="Glavina del Rio T."/>
            <person name="Hammon N."/>
            <person name="Israni S."/>
            <person name="Dalin E."/>
            <person name="Tice H."/>
            <person name="Pitluck S."/>
            <person name="Chertkov O."/>
            <person name="Brettin T."/>
            <person name="Bruce D."/>
            <person name="Han C."/>
            <person name="Schmutz J."/>
            <person name="Larimer F."/>
            <person name="Land M."/>
            <person name="Hauser L."/>
            <person name="Kyrpides N."/>
            <person name="Kim E."/>
            <person name="Richardson P."/>
            <person name="Mackenzie C."/>
            <person name="Choudhary M."/>
            <person name="Donohue T.J."/>
            <person name="Kaplan S."/>
        </authorList>
    </citation>
    <scope>NUCLEOTIDE SEQUENCE [LARGE SCALE GENOMIC DNA]</scope>
    <source>
        <strain>ATCC 17025 / ATH 2.4.3</strain>
    </source>
</reference>
<name>RPOC_CERS5</name>
<gene>
    <name evidence="1" type="primary">rpoC</name>
    <name type="ordered locus">Rsph17025_2541</name>
</gene>
<sequence length="1415" mass="157257">MNQELSTNPFNPVAPVKTFDEIKISLASPERILSWSYGEIKKPETINYRTFKPERDGLFCARIFGPIKDYECLCGKYKRMKYRGVVCEKCGVEVTLQKVRRERMGHIELAAPVAHIWFLKSLPSRIGLMLDMTLRDLERILYFENYVVIEPGLTDLTYGQLMTEEEFLDAQDQYGADAFTANIGAEAIREMLSAIDLEQTAETLREELKEATGELKPKKIIKRLKIVESFLESGNRPEWMILTVLPVIPPELRPLVPLDGGRFATSDLNDLYRRVINRNNRLKRLIELRAPDIIVRNEKRMLQEAVDALFDNGRRGRVITGTNKRPLKSLSDMLKGKQGRFRQNLLGKRVDFSGRSVIVTGPELKLHQCGLPKKMALELFKPFIYSRLEAKGLSSTVKQAKKLVEKERPEVWDILDEVIREHPVLLNRAPTLHRLGIQAFEPILIEGKAIQLHPLVCSAFNADFDGDQMAVHVPLSLEAQLEARVLMMSTNNVLSPANGAPIIVPSQDMVLGLYYTTMERRGMKGEGMAFSSVEEVEHALAAGEVHLHATITARIKQIDDEGNEVVKRYQTTPGRLRLGNLLPLNAKAPFELVNRLLRKKDVQNVIDTVYRYCGQKESVIFCDQIMGMGFREAFKAGISFGKDDMLIPDTKWPIVNEVRDQVKEFEQQYMDGLITQGEKYNKVVDAWSKCSDKVAGEMMAEISAVRYDDAGAEKEPNSVYMMSHSGARGSPAQMKQLGGMRGLMAKPNGEIIETPIISNFKEGLTVLEYFNSTHGARKGLADTALKTANSGYLTRRLVDVAQDCIVRSHDCGTENAITASAAVNDGEVVSPLSERVLGRVAAEDILVPGTDEVVVARGELIDERRADLIDQANVALVRIRSPLTCEAEEGVCAMCYGRDLARGTLVNIGEAVGIIAAQSIGEPGTQLTMRTFHIGGIAQGGQQSFLEASQEGRIEFRNPNLLENANGEQIVMGRNMQLAIIDEAGQERATHKLTYGAKVHVKDGQSVKRGTRLFEWDPYTLPIIAEKGGVARFVDLVSGISVREDTDEATGMTQKIVSDWRSTPKGGDLKPEIIIMDPDTGNPMRNEAGNPISYPMSVEAILSVEDGQTVRAGDVVARIPREGARTKDITGGLPRVAELFEARRPKDHAIIAENDGYVRFGKDYKNKRRITIEPVDETLNSVEYMVPKGKHIPVQEGDFVQKGDYIMDGNPAPHDILRIMGVEALANYMIDEVQEVYRLQGVKINDKHIEVIVRQMLQKYEILDSGETTLLKGEHVDKAELDETNEKAIQHGMRPAHAEPILLGITKASLQTRSFISAASFQETTRVLTEASVQGKRDKLVGLKENVIVGRLIPAGTGGATSRVKKIAHDRDQTVIDARRAEAESAAALAAPTDEVIDLGPEDSGLVETVESRKE</sequence>
<protein>
    <recommendedName>
        <fullName evidence="1">DNA-directed RNA polymerase subunit beta'</fullName>
        <shortName evidence="1">RNAP subunit beta'</shortName>
        <ecNumber evidence="1">2.7.7.6</ecNumber>
    </recommendedName>
    <alternativeName>
        <fullName evidence="1">RNA polymerase subunit beta'</fullName>
    </alternativeName>
    <alternativeName>
        <fullName evidence="1">Transcriptase subunit beta'</fullName>
    </alternativeName>
</protein>
<dbReference type="EC" id="2.7.7.6" evidence="1"/>
<dbReference type="EMBL" id="CP000661">
    <property type="protein sequence ID" value="ABP71429.1"/>
    <property type="molecule type" value="Genomic_DNA"/>
</dbReference>
<dbReference type="SMR" id="A4WVL5"/>
<dbReference type="STRING" id="349102.Rsph17025_2541"/>
<dbReference type="KEGG" id="rsq:Rsph17025_2541"/>
<dbReference type="eggNOG" id="COG0086">
    <property type="taxonomic scope" value="Bacteria"/>
</dbReference>
<dbReference type="HOGENOM" id="CLU_000524_3_1_5"/>
<dbReference type="BioCyc" id="RSPH349102:G1G8M-2619-MONOMER"/>
<dbReference type="GO" id="GO:0000428">
    <property type="term" value="C:DNA-directed RNA polymerase complex"/>
    <property type="evidence" value="ECO:0007669"/>
    <property type="project" value="UniProtKB-KW"/>
</dbReference>
<dbReference type="GO" id="GO:0003677">
    <property type="term" value="F:DNA binding"/>
    <property type="evidence" value="ECO:0007669"/>
    <property type="project" value="UniProtKB-UniRule"/>
</dbReference>
<dbReference type="GO" id="GO:0003899">
    <property type="term" value="F:DNA-directed RNA polymerase activity"/>
    <property type="evidence" value="ECO:0007669"/>
    <property type="project" value="UniProtKB-UniRule"/>
</dbReference>
<dbReference type="GO" id="GO:0000287">
    <property type="term" value="F:magnesium ion binding"/>
    <property type="evidence" value="ECO:0007669"/>
    <property type="project" value="UniProtKB-UniRule"/>
</dbReference>
<dbReference type="GO" id="GO:0008270">
    <property type="term" value="F:zinc ion binding"/>
    <property type="evidence" value="ECO:0007669"/>
    <property type="project" value="UniProtKB-UniRule"/>
</dbReference>
<dbReference type="GO" id="GO:0006351">
    <property type="term" value="P:DNA-templated transcription"/>
    <property type="evidence" value="ECO:0007669"/>
    <property type="project" value="UniProtKB-UniRule"/>
</dbReference>
<dbReference type="CDD" id="cd02655">
    <property type="entry name" value="RNAP_beta'_C"/>
    <property type="match status" value="1"/>
</dbReference>
<dbReference type="CDD" id="cd01609">
    <property type="entry name" value="RNAP_beta'_N"/>
    <property type="match status" value="1"/>
</dbReference>
<dbReference type="FunFam" id="4.10.860.120:FF:000001">
    <property type="entry name" value="DNA-directed RNA polymerase subunit beta"/>
    <property type="match status" value="1"/>
</dbReference>
<dbReference type="Gene3D" id="1.10.132.30">
    <property type="match status" value="1"/>
</dbReference>
<dbReference type="Gene3D" id="1.10.150.390">
    <property type="match status" value="1"/>
</dbReference>
<dbReference type="Gene3D" id="1.10.1790.20">
    <property type="match status" value="1"/>
</dbReference>
<dbReference type="Gene3D" id="1.10.40.90">
    <property type="match status" value="1"/>
</dbReference>
<dbReference type="Gene3D" id="2.40.40.20">
    <property type="match status" value="1"/>
</dbReference>
<dbReference type="Gene3D" id="2.40.50.100">
    <property type="match status" value="3"/>
</dbReference>
<dbReference type="Gene3D" id="4.10.860.120">
    <property type="entry name" value="RNA polymerase II, clamp domain"/>
    <property type="match status" value="1"/>
</dbReference>
<dbReference type="Gene3D" id="1.10.274.100">
    <property type="entry name" value="RNA polymerase Rpb1, domain 3"/>
    <property type="match status" value="2"/>
</dbReference>
<dbReference type="HAMAP" id="MF_01322">
    <property type="entry name" value="RNApol_bact_RpoC"/>
    <property type="match status" value="1"/>
</dbReference>
<dbReference type="InterPro" id="IPR045867">
    <property type="entry name" value="DNA-dir_RpoC_beta_prime"/>
</dbReference>
<dbReference type="InterPro" id="IPR012754">
    <property type="entry name" value="DNA-dir_RpoC_beta_prime_bact"/>
</dbReference>
<dbReference type="InterPro" id="IPR000722">
    <property type="entry name" value="RNA_pol_asu"/>
</dbReference>
<dbReference type="InterPro" id="IPR006592">
    <property type="entry name" value="RNA_pol_N"/>
</dbReference>
<dbReference type="InterPro" id="IPR007080">
    <property type="entry name" value="RNA_pol_Rpb1_1"/>
</dbReference>
<dbReference type="InterPro" id="IPR007066">
    <property type="entry name" value="RNA_pol_Rpb1_3"/>
</dbReference>
<dbReference type="InterPro" id="IPR042102">
    <property type="entry name" value="RNA_pol_Rpb1_3_sf"/>
</dbReference>
<dbReference type="InterPro" id="IPR007083">
    <property type="entry name" value="RNA_pol_Rpb1_4"/>
</dbReference>
<dbReference type="InterPro" id="IPR007081">
    <property type="entry name" value="RNA_pol_Rpb1_5"/>
</dbReference>
<dbReference type="InterPro" id="IPR044893">
    <property type="entry name" value="RNA_pol_Rpb1_clamp_domain"/>
</dbReference>
<dbReference type="InterPro" id="IPR038120">
    <property type="entry name" value="Rpb1_funnel_sf"/>
</dbReference>
<dbReference type="NCBIfam" id="TIGR02386">
    <property type="entry name" value="rpoC_TIGR"/>
    <property type="match status" value="1"/>
</dbReference>
<dbReference type="PANTHER" id="PTHR19376">
    <property type="entry name" value="DNA-DIRECTED RNA POLYMERASE"/>
    <property type="match status" value="1"/>
</dbReference>
<dbReference type="PANTHER" id="PTHR19376:SF54">
    <property type="entry name" value="DNA-DIRECTED RNA POLYMERASE SUBUNIT BETA"/>
    <property type="match status" value="1"/>
</dbReference>
<dbReference type="Pfam" id="PF04997">
    <property type="entry name" value="RNA_pol_Rpb1_1"/>
    <property type="match status" value="1"/>
</dbReference>
<dbReference type="Pfam" id="PF00623">
    <property type="entry name" value="RNA_pol_Rpb1_2"/>
    <property type="match status" value="2"/>
</dbReference>
<dbReference type="Pfam" id="PF04983">
    <property type="entry name" value="RNA_pol_Rpb1_3"/>
    <property type="match status" value="1"/>
</dbReference>
<dbReference type="Pfam" id="PF05000">
    <property type="entry name" value="RNA_pol_Rpb1_4"/>
    <property type="match status" value="1"/>
</dbReference>
<dbReference type="Pfam" id="PF04998">
    <property type="entry name" value="RNA_pol_Rpb1_5"/>
    <property type="match status" value="1"/>
</dbReference>
<dbReference type="SMART" id="SM00663">
    <property type="entry name" value="RPOLA_N"/>
    <property type="match status" value="1"/>
</dbReference>
<dbReference type="SUPFAM" id="SSF64484">
    <property type="entry name" value="beta and beta-prime subunits of DNA dependent RNA-polymerase"/>
    <property type="match status" value="1"/>
</dbReference>
<accession>A4WVL5</accession>
<keyword id="KW-0240">DNA-directed RNA polymerase</keyword>
<keyword id="KW-0460">Magnesium</keyword>
<keyword id="KW-0479">Metal-binding</keyword>
<keyword id="KW-0548">Nucleotidyltransferase</keyword>
<keyword id="KW-0804">Transcription</keyword>
<keyword id="KW-0808">Transferase</keyword>
<keyword id="KW-0862">Zinc</keyword>
<comment type="function">
    <text evidence="1">DNA-dependent RNA polymerase catalyzes the transcription of DNA into RNA using the four ribonucleoside triphosphates as substrates.</text>
</comment>
<comment type="catalytic activity">
    <reaction evidence="1">
        <text>RNA(n) + a ribonucleoside 5'-triphosphate = RNA(n+1) + diphosphate</text>
        <dbReference type="Rhea" id="RHEA:21248"/>
        <dbReference type="Rhea" id="RHEA-COMP:14527"/>
        <dbReference type="Rhea" id="RHEA-COMP:17342"/>
        <dbReference type="ChEBI" id="CHEBI:33019"/>
        <dbReference type="ChEBI" id="CHEBI:61557"/>
        <dbReference type="ChEBI" id="CHEBI:140395"/>
        <dbReference type="EC" id="2.7.7.6"/>
    </reaction>
</comment>
<comment type="cofactor">
    <cofactor evidence="1">
        <name>Mg(2+)</name>
        <dbReference type="ChEBI" id="CHEBI:18420"/>
    </cofactor>
    <text evidence="1">Binds 1 Mg(2+) ion per subunit.</text>
</comment>
<comment type="cofactor">
    <cofactor evidence="1">
        <name>Zn(2+)</name>
        <dbReference type="ChEBI" id="CHEBI:29105"/>
    </cofactor>
    <text evidence="1">Binds 2 Zn(2+) ions per subunit.</text>
</comment>
<comment type="subunit">
    <text evidence="1">The RNAP catalytic core consists of 2 alpha, 1 beta, 1 beta' and 1 omega subunit. When a sigma factor is associated with the core the holoenzyme is formed, which can initiate transcription.</text>
</comment>
<comment type="similarity">
    <text evidence="1">Belongs to the RNA polymerase beta' chain family.</text>
</comment>
<evidence type="ECO:0000255" key="1">
    <source>
        <dbReference type="HAMAP-Rule" id="MF_01322"/>
    </source>
</evidence>